<name>PORC_METBF</name>
<feature type="chain" id="PRO_0000097128" description="Pyruvate synthase subunit PorC">
    <location>
        <begin position="1"/>
        <end position="182"/>
    </location>
</feature>
<gene>
    <name type="primary">porC</name>
    <name type="ordered locus">Mbar_A1002</name>
</gene>
<sequence length="182" mass="19526">MKEIRIHGRGGQGSVTAAEMLSVAAFEDGKFSQAFPAFGVERRGAPVQAFTRINNNPIRLRSQVYTPDYVIVQDATLLETVDVASGVKDDGIIIVNTTENPESLKLNTKARVMTVDATKVAMDIIGVPIVNTVLLGAFAGATGEINVESIQHAIRARFSGKVGEKNANAIQKAYKLIRGEEA</sequence>
<accession>P80523</accession>
<accession>Q46DS2</accession>
<organism>
    <name type="scientific">Methanosarcina barkeri (strain Fusaro / DSM 804)</name>
    <dbReference type="NCBI Taxonomy" id="269797"/>
    <lineage>
        <taxon>Archaea</taxon>
        <taxon>Methanobacteriati</taxon>
        <taxon>Methanobacteriota</taxon>
        <taxon>Stenosarchaea group</taxon>
        <taxon>Methanomicrobia</taxon>
        <taxon>Methanosarcinales</taxon>
        <taxon>Methanosarcinaceae</taxon>
        <taxon>Methanosarcina</taxon>
    </lineage>
</organism>
<proteinExistence type="evidence at protein level"/>
<keyword id="KW-0903">Direct protein sequencing</keyword>
<keyword id="KW-0560">Oxidoreductase</keyword>
<comment type="catalytic activity">
    <reaction>
        <text>2 oxidized [2Fe-2S]-[ferredoxin] + pyruvate + CoA = 2 reduced [2Fe-2S]-[ferredoxin] + acetyl-CoA + CO2 + H(+)</text>
        <dbReference type="Rhea" id="RHEA:12765"/>
        <dbReference type="Rhea" id="RHEA-COMP:10000"/>
        <dbReference type="Rhea" id="RHEA-COMP:10001"/>
        <dbReference type="ChEBI" id="CHEBI:15361"/>
        <dbReference type="ChEBI" id="CHEBI:15378"/>
        <dbReference type="ChEBI" id="CHEBI:16526"/>
        <dbReference type="ChEBI" id="CHEBI:33737"/>
        <dbReference type="ChEBI" id="CHEBI:33738"/>
        <dbReference type="ChEBI" id="CHEBI:57287"/>
        <dbReference type="ChEBI" id="CHEBI:57288"/>
        <dbReference type="EC" id="1.2.7.1"/>
    </reaction>
</comment>
<comment type="subunit">
    <text>Heterotetramer of one alpha, one beta, one delta and one gamma chain.</text>
</comment>
<comment type="miscellaneous">
    <text>It also catalyzes the oxidation of 2-oxobutyrate.</text>
</comment>
<dbReference type="EC" id="1.2.7.1"/>
<dbReference type="EMBL" id="CP000099">
    <property type="protein sequence ID" value="AAZ69970.1"/>
    <property type="molecule type" value="Genomic_DNA"/>
</dbReference>
<dbReference type="PIR" id="S65418">
    <property type="entry name" value="S65418"/>
</dbReference>
<dbReference type="SMR" id="P80523"/>
<dbReference type="STRING" id="269797.Mbar_A1002"/>
<dbReference type="PaxDb" id="269797-Mbar_A1002"/>
<dbReference type="KEGG" id="mba:Mbar_A1002"/>
<dbReference type="eggNOG" id="arCOG01603">
    <property type="taxonomic scope" value="Archaea"/>
</dbReference>
<dbReference type="HOGENOM" id="CLU_087284_2_0_2"/>
<dbReference type="OrthoDB" id="372091at2157"/>
<dbReference type="BRENDA" id="1.2.7.1">
    <property type="organism ID" value="3250"/>
</dbReference>
<dbReference type="GO" id="GO:0019164">
    <property type="term" value="F:pyruvate synthase activity"/>
    <property type="evidence" value="ECO:0007669"/>
    <property type="project" value="UniProtKB-EC"/>
</dbReference>
<dbReference type="Gene3D" id="3.40.920.10">
    <property type="entry name" value="Pyruvate-ferredoxin oxidoreductase, PFOR, domain III"/>
    <property type="match status" value="1"/>
</dbReference>
<dbReference type="InterPro" id="IPR051626">
    <property type="entry name" value="Oxidoreductase_gamma_subunit"/>
</dbReference>
<dbReference type="InterPro" id="IPR011894">
    <property type="entry name" value="PorC_KorC"/>
</dbReference>
<dbReference type="InterPro" id="IPR053412">
    <property type="entry name" value="Pyruvate_synthase_PorC"/>
</dbReference>
<dbReference type="InterPro" id="IPR019752">
    <property type="entry name" value="Pyrv/ketoisovalerate_OxRed_cat"/>
</dbReference>
<dbReference type="InterPro" id="IPR002869">
    <property type="entry name" value="Pyrv_flavodox_OxRed_cen"/>
</dbReference>
<dbReference type="NCBIfam" id="TIGR02175">
    <property type="entry name" value="PorC_KorC"/>
    <property type="match status" value="1"/>
</dbReference>
<dbReference type="NCBIfam" id="NF040683">
    <property type="entry name" value="PorC_Meth_Thtga"/>
    <property type="match status" value="1"/>
</dbReference>
<dbReference type="NCBIfam" id="NF006321">
    <property type="entry name" value="PRK08534.1"/>
    <property type="match status" value="1"/>
</dbReference>
<dbReference type="PANTHER" id="PTHR43366">
    <property type="entry name" value="PYRUVATE SYNTHASE SUBUNIT PORC"/>
    <property type="match status" value="1"/>
</dbReference>
<dbReference type="PANTHER" id="PTHR43366:SF1">
    <property type="entry name" value="PYRUVATE SYNTHASE SUBUNIT PORC"/>
    <property type="match status" value="1"/>
</dbReference>
<dbReference type="Pfam" id="PF01558">
    <property type="entry name" value="POR"/>
    <property type="match status" value="1"/>
</dbReference>
<dbReference type="SUPFAM" id="SSF53323">
    <property type="entry name" value="Pyruvate-ferredoxin oxidoreductase, PFOR, domain III"/>
    <property type="match status" value="1"/>
</dbReference>
<reference key="1">
    <citation type="journal article" date="2006" name="J. Bacteriol.">
        <title>The Methanosarcina barkeri genome: comparative analysis with Methanosarcina acetivorans and Methanosarcina mazei reveals extensive rearrangement within methanosarcinal genomes.</title>
        <authorList>
            <person name="Maeder D.L."/>
            <person name="Anderson I."/>
            <person name="Brettin T.S."/>
            <person name="Bruce D.C."/>
            <person name="Gilna P."/>
            <person name="Han C.S."/>
            <person name="Lapidus A."/>
            <person name="Metcalf W.W."/>
            <person name="Saunders E."/>
            <person name="Tapia R."/>
            <person name="Sowers K.R."/>
        </authorList>
    </citation>
    <scope>NUCLEOTIDE SEQUENCE [LARGE SCALE GENOMIC DNA]</scope>
    <source>
        <strain>Fusaro / DSM 804</strain>
    </source>
</reference>
<reference key="2">
    <citation type="journal article" date="1996" name="Eur. J. Biochem.">
        <title>Catalytic properties, molecular composition and sequence alignments of pyruvate: ferredoxin oxidoreductase from the methanogenic archaeon Methanosarcina barkeri (strain Fusaro).</title>
        <authorList>
            <person name="Bock A.-K."/>
            <person name="Kunow J."/>
            <person name="Glasemacher J."/>
            <person name="Schoenheit P."/>
        </authorList>
    </citation>
    <scope>PROTEIN SEQUENCE OF 1-31</scope>
</reference>
<protein>
    <recommendedName>
        <fullName>Pyruvate synthase subunit PorC</fullName>
        <ecNumber>1.2.7.1</ecNumber>
    </recommendedName>
    <alternativeName>
        <fullName>Pyruvate oxidoreductase gamma chain</fullName>
        <shortName>POR</shortName>
    </alternativeName>
    <alternativeName>
        <fullName>Pyruvic-ferredoxin oxidoreductase subunit gamma</fullName>
    </alternativeName>
</protein>